<sequence length="2789" mass="297487">MALGGALALALALALAVLGPLSLRVLAGDCKGQRQVLREAPGFVTDGAGNYSVNGNCEWLIEAPSPQHRILLDFLFLDTECTYDYLFVYDGDSPQGPLLASLSGSTRPPPIEASSGKMLLHLFSDANYNLLGFNASFRFSLCPGGCQNHGQCKSPGVCVCEPGWGGPDCGLQECSAYCGSHGTCASTLGPCRCEPGFLGRACDLHLWENQGAGWWHSVSAGDPAFSARIGAAGAFLSPPGLLAVFGGQDLNKALGDLVLYNFSTNTWESWDLTPAPAARHSHVAVAWAGLLVLMGGELANGLLTNDVWAFSPLGGGHWELLAPPASSSSGPPGLAGHAAALVDDIWLYVSGGRTQHDLFSSGLFRFRLDHTSRGYWEQVIPAGGRPPAATGHSMVFHAPSRTLLVHGGHRPSTARFSVRVNSTELFHVERRVWTTLKGRDGLQGPRERAFHTASVLGNYMVVYGGNVHTHYQEEKCYEDGIFFYHLGCHQWVSGAELAPPGTPEGRAAPPSGRYSHVAAVLGGSVLLVAGGYSGRPRGDLMAYKVPPFVFQAPALDYHLDYCSMYTDHSVCSRDPECSWCQGACQAAPPPGTPSGACPAASCLGLGRLLSDCQACLAFSSPTAPPRGPGALGWCVHNESCLPRPEQARCRGEQISGTVGWWGPAPVFVTSLEACVTQSFLPGLHLLTFQQPPNASQPDKVSIVRSTTITLTPSPETDVSLVYRGFIHPLLPGGPGGPGAEDVAVWARAQRLHVLARMARGPDTENMEEVGRWVAQQEKETRRLQRPGSDRLFPLPGRGNKYAVEIRGQLNGSAGPGHSELTLLWDRTGVPGGSEISFFFLEPYRSSACTSYSSCLGCLADQGCGWCLNSATCHLRQGRAHCEDDGSGESLLVLVPALCPLCEEHRDCHACTQDPFCEWHQSTNRKGDAACSRRGRGRGALKNPEECPPLCSQRLTCEDCLANSSQCAWCQSTHTCFLFAAYLARYPHGGCRGWDDSVHSEPRCRSCGGFLTCHECLQSHECGWCGNEDNPTLGRCLQGDFSGPLGGGNCSLWVGEGLGLPVALPARWAYARCPDVDECRLGLARCHPRATCLNTPLSYECHCQRGYQGDGITHCNRTCLEDCGHGVCSGPPDFTCVCDLGWTSDLPPPTPAPGPPAPRCSRDCGCSFHSHCRRRGPGYCDECQDWTWGEHCERCRPGSFGNATGSGGCRPCQCNGHGDPRRGHCDNLTGLCFCQDHTEGAHCQICSPGYYGDPRAGGSCFRECGGRALLTNVSSVALGSRRFGGLLPPGGGAARAGPGLSYCVWVVSATEALQPCVPGTLCPPLTLTFSPDSSTPCTLSYVLAFDGFPRFLDTGVVQSDRSLIAAFCGQRRDRPLTVQALSGLLVLHWEANGSSSWGFNASVGSARCGSGGPGSCPVPQECVPQDGAAGAGLCRCPQGWAGPHCRMALCPENCNAHTGAGICNQSLGVCICAEGFGGPDCATKLDGGQLVWETLMDSRLSADTASRFLHRLGHTMVEGPDATLWMFGGLGLPQGLLGNLYRYSVSERRWTQMLAGAEDGGPGPSPRSFHAAAYVPAGRGAMYLLGGLTAGGVTRDFWVLNLTTLQWRQEKPPQNMELPAVAGHTLTARRGLSLLLVGGYSPENGFNQQLLEYQLATGTWVSGAQSGTPPTGLYGHSAVYHEATDSLYVFGGFRFHVELAAPSPELYSLHCPDRTWSLLAPSQGAKPRPRLFHASALLGDTMVVLGGRSDPDEFSSDVLLYQVNCNTWLLPALTRPAFVGSPMEESVAHAVAAVGSRLYISGGFGGVALGRLLALTLPPDPCRLLPSPEACNQSGACTWCHGACLSGDQAHRLGCGVPPCSPMPRSPEECRRLRTCSECLARHPRTLQPGDGEASIPRCKWCTNCPEGACIGRNGSCTSENDCRINQREVFWAGNCSEAACGAADCEQCTREGKCMWTRQFKRTGETRRILSVQPTYDWTCFSHSLLNVSPMPVESSPPLPCPTPCHLLPNCTSCLASKGADGGWQHCVWSSSLQQCLSPSYLPLRCMAGGCGRLLRGPESCSLGCAQATQCALCLRRPHCGWCAWGGQDGGGHCMEGGLSGPRDGLTCGRPGASWAFLSCPPEDECANGHHDCNETQNCHDQPHGYECSCKTGYTMDNVTGVCRPVCAQGCVNGSCVEPDHCRCHFGFVGRNCSTECRCNRHSECAGVGAQDHCLLCRNHTKGSHCEQCLPLFVGSALGGGTCRPCHAFCRGNSHVCVSRKELEMARKEPEKYSLDPEEIETWVAEGPSEDEAVCVNCQNNSYGDRCESCLHGYFLLDGKCTKCQCNGHADTCNEQDGTGCPCQNNTETGTCQGSSPSDRRDCYKYQCAKCRESFHGSPLGGQQCYRLISVEQECCLDPTSQTNCFHEPKRRALGPGRTVLFGVQPKFTNVDIRLTLDVTFGAVDLYVSTSYDTFVVRVAPDTGVHTVHIQPPPPPPPPPPPADGVPRVAADLGGLGTGSGSGSPVEPRVREVWPRGLITYVTVTEPSAVLVVRSVRDRLVITYPHEHHALKSSRFYLLLLGVGDPNGPGANGSADSQGLLFFRQDQAHIDLFVFFSVFFSCFFLFLSLCVLLWKAKQALDQRQEQRRHLQEMTKMASRPFAKVTVCFPPDPAGPAPAWKPAGLPPPAFRRSEPFLAPLLLTGAGGPWGPMGGGCCPPALPATTAGLRAGPITLEPTEDGMAGVATLLLQLPGGPHAPNGACLGSALVTLRHRLHEYCGGSGGAGGSGHGGGGGRKGLLSQDNLTSMSL</sequence>
<comment type="function">
    <text evidence="9">Acts as a negative regulator of hedgehog signaling (PubMed:29290584).</text>
</comment>
<comment type="subcellular location">
    <subcellularLocation>
        <location evidence="10">Membrane</location>
        <topology evidence="10">Single-pass type I membrane protein</topology>
    </subcellularLocation>
</comment>
<comment type="tissue specificity">
    <text evidence="8">Highest expression in brain, testis and kidney.</text>
</comment>
<comment type="sequence caution" evidence="10">
    <conflict type="miscellaneous discrepancy">
        <sequence resource="EMBL-CDS" id="AAH36727"/>
    </conflict>
    <text>Intron retention.</text>
</comment>
<comment type="sequence caution" evidence="10">
    <conflict type="miscellaneous discrepancy">
        <sequence resource="EMBL-CDS" id="AAH51121"/>
    </conflict>
    <text>Contaminating sequence. Sequence of unknown origin in the C-terminal part.</text>
</comment>
<proteinExistence type="evidence at protein level"/>
<keyword id="KW-0106">Calcium</keyword>
<keyword id="KW-1015">Disulfide bond</keyword>
<keyword id="KW-0245">EGF-like domain</keyword>
<keyword id="KW-0325">Glycoprotein</keyword>
<keyword id="KW-0880">Kelch repeat</keyword>
<keyword id="KW-0424">Laminin EGF-like domain</keyword>
<keyword id="KW-0472">Membrane</keyword>
<keyword id="KW-0597">Phosphoprotein</keyword>
<keyword id="KW-1185">Reference proteome</keyword>
<keyword id="KW-0677">Repeat</keyword>
<keyword id="KW-0732">Signal</keyword>
<keyword id="KW-0812">Transmembrane</keyword>
<keyword id="KW-1133">Transmembrane helix</keyword>
<name>MEGF8_MOUSE</name>
<accession>P60882</accession>
<accession>B3GR00</accession>
<accession>Q80TR3</accession>
<accession>Q80V41</accession>
<accession>Q8BMN9</accession>
<accession>Q8JZW7</accession>
<accession>Q8K0J3</accession>
<reference key="1">
    <citation type="journal article" date="2008" name="Genesis">
        <title>Genetic and phenotypic studies of the dark-like mutant mouse.</title>
        <authorList>
            <person name="Cota C.D."/>
            <person name="Liu R.R."/>
            <person name="Sumberac T.M."/>
            <person name="Jung S."/>
            <person name="Vencato D."/>
            <person name="Millet Y.H."/>
            <person name="Gunn T.M."/>
        </authorList>
    </citation>
    <scope>NUCLEOTIDE SEQUENCE [MRNA]</scope>
    <scope>TISSUE SPECIFICITY</scope>
    <source>
        <strain>C3H/HeJ</strain>
        <tissue>Brain</tissue>
    </source>
</reference>
<reference key="2">
    <citation type="journal article" date="2004" name="Genome Res.">
        <title>The status, quality, and expansion of the NIH full-length cDNA project: the Mammalian Gene Collection (MGC).</title>
        <authorList>
            <consortium name="The MGC Project Team"/>
        </authorList>
    </citation>
    <scope>NUCLEOTIDE SEQUENCE [LARGE SCALE MRNA] OF 408-1147 AND 1382-2789</scope>
    <source>
        <tissue>Brain</tissue>
        <tissue>Colon</tissue>
        <tissue>Mammary tumor</tissue>
        <tissue>Retina</tissue>
    </source>
</reference>
<reference key="3">
    <citation type="journal article" date="2003" name="DNA Res.">
        <title>Prediction of the coding sequences of mouse homologues of KIAA gene: II. The complete nucleotide sequences of 400 mouse KIAA-homologous cDNAs identified by screening of terminal sequences of cDNA clones randomly sampled from size-fractionated libraries.</title>
        <authorList>
            <person name="Okazaki N."/>
            <person name="Kikuno R."/>
            <person name="Ohara R."/>
            <person name="Inamoto S."/>
            <person name="Aizawa H."/>
            <person name="Yuasa S."/>
            <person name="Nakajima D."/>
            <person name="Nagase T."/>
            <person name="Ohara O."/>
            <person name="Koga H."/>
        </authorList>
    </citation>
    <scope>NUCLEOTIDE SEQUENCE [LARGE SCALE MRNA] OF 1391-2789</scope>
    <source>
        <tissue>Brain</tissue>
    </source>
</reference>
<reference key="4">
    <citation type="journal article" date="2005" name="Science">
        <title>The transcriptional landscape of the mammalian genome.</title>
        <authorList>
            <person name="Carninci P."/>
            <person name="Kasukawa T."/>
            <person name="Katayama S."/>
            <person name="Gough J."/>
            <person name="Frith M.C."/>
            <person name="Maeda N."/>
            <person name="Oyama R."/>
            <person name="Ravasi T."/>
            <person name="Lenhard B."/>
            <person name="Wells C."/>
            <person name="Kodzius R."/>
            <person name="Shimokawa K."/>
            <person name="Bajic V.B."/>
            <person name="Brenner S.E."/>
            <person name="Batalov S."/>
            <person name="Forrest A.R."/>
            <person name="Zavolan M."/>
            <person name="Davis M.J."/>
            <person name="Wilming L.G."/>
            <person name="Aidinis V."/>
            <person name="Allen J.E."/>
            <person name="Ambesi-Impiombato A."/>
            <person name="Apweiler R."/>
            <person name="Aturaliya R.N."/>
            <person name="Bailey T.L."/>
            <person name="Bansal M."/>
            <person name="Baxter L."/>
            <person name="Beisel K.W."/>
            <person name="Bersano T."/>
            <person name="Bono H."/>
            <person name="Chalk A.M."/>
            <person name="Chiu K.P."/>
            <person name="Choudhary V."/>
            <person name="Christoffels A."/>
            <person name="Clutterbuck D.R."/>
            <person name="Crowe M.L."/>
            <person name="Dalla E."/>
            <person name="Dalrymple B.P."/>
            <person name="de Bono B."/>
            <person name="Della Gatta G."/>
            <person name="di Bernardo D."/>
            <person name="Down T."/>
            <person name="Engstrom P."/>
            <person name="Fagiolini M."/>
            <person name="Faulkner G."/>
            <person name="Fletcher C.F."/>
            <person name="Fukushima T."/>
            <person name="Furuno M."/>
            <person name="Futaki S."/>
            <person name="Gariboldi M."/>
            <person name="Georgii-Hemming P."/>
            <person name="Gingeras T.R."/>
            <person name="Gojobori T."/>
            <person name="Green R.E."/>
            <person name="Gustincich S."/>
            <person name="Harbers M."/>
            <person name="Hayashi Y."/>
            <person name="Hensch T.K."/>
            <person name="Hirokawa N."/>
            <person name="Hill D."/>
            <person name="Huminiecki L."/>
            <person name="Iacono M."/>
            <person name="Ikeo K."/>
            <person name="Iwama A."/>
            <person name="Ishikawa T."/>
            <person name="Jakt M."/>
            <person name="Kanapin A."/>
            <person name="Katoh M."/>
            <person name="Kawasawa Y."/>
            <person name="Kelso J."/>
            <person name="Kitamura H."/>
            <person name="Kitano H."/>
            <person name="Kollias G."/>
            <person name="Krishnan S.P."/>
            <person name="Kruger A."/>
            <person name="Kummerfeld S.K."/>
            <person name="Kurochkin I.V."/>
            <person name="Lareau L.F."/>
            <person name="Lazarevic D."/>
            <person name="Lipovich L."/>
            <person name="Liu J."/>
            <person name="Liuni S."/>
            <person name="McWilliam S."/>
            <person name="Madan Babu M."/>
            <person name="Madera M."/>
            <person name="Marchionni L."/>
            <person name="Matsuda H."/>
            <person name="Matsuzawa S."/>
            <person name="Miki H."/>
            <person name="Mignone F."/>
            <person name="Miyake S."/>
            <person name="Morris K."/>
            <person name="Mottagui-Tabar S."/>
            <person name="Mulder N."/>
            <person name="Nakano N."/>
            <person name="Nakauchi H."/>
            <person name="Ng P."/>
            <person name="Nilsson R."/>
            <person name="Nishiguchi S."/>
            <person name="Nishikawa S."/>
            <person name="Nori F."/>
            <person name="Ohara O."/>
            <person name="Okazaki Y."/>
            <person name="Orlando V."/>
            <person name="Pang K.C."/>
            <person name="Pavan W.J."/>
            <person name="Pavesi G."/>
            <person name="Pesole G."/>
            <person name="Petrovsky N."/>
            <person name="Piazza S."/>
            <person name="Reed J."/>
            <person name="Reid J.F."/>
            <person name="Ring B.Z."/>
            <person name="Ringwald M."/>
            <person name="Rost B."/>
            <person name="Ruan Y."/>
            <person name="Salzberg S.L."/>
            <person name="Sandelin A."/>
            <person name="Schneider C."/>
            <person name="Schoenbach C."/>
            <person name="Sekiguchi K."/>
            <person name="Semple C.A."/>
            <person name="Seno S."/>
            <person name="Sessa L."/>
            <person name="Sheng Y."/>
            <person name="Shibata Y."/>
            <person name="Shimada H."/>
            <person name="Shimada K."/>
            <person name="Silva D."/>
            <person name="Sinclair B."/>
            <person name="Sperling S."/>
            <person name="Stupka E."/>
            <person name="Sugiura K."/>
            <person name="Sultana R."/>
            <person name="Takenaka Y."/>
            <person name="Taki K."/>
            <person name="Tammoja K."/>
            <person name="Tan S.L."/>
            <person name="Tang S."/>
            <person name="Taylor M.S."/>
            <person name="Tegner J."/>
            <person name="Teichmann S.A."/>
            <person name="Ueda H.R."/>
            <person name="van Nimwegen E."/>
            <person name="Verardo R."/>
            <person name="Wei C.L."/>
            <person name="Yagi K."/>
            <person name="Yamanishi H."/>
            <person name="Zabarovsky E."/>
            <person name="Zhu S."/>
            <person name="Zimmer A."/>
            <person name="Hide W."/>
            <person name="Bult C."/>
            <person name="Grimmond S.M."/>
            <person name="Teasdale R.D."/>
            <person name="Liu E.T."/>
            <person name="Brusic V."/>
            <person name="Quackenbush J."/>
            <person name="Wahlestedt C."/>
            <person name="Mattick J.S."/>
            <person name="Hume D.A."/>
            <person name="Kai C."/>
            <person name="Sasaki D."/>
            <person name="Tomaru Y."/>
            <person name="Fukuda S."/>
            <person name="Kanamori-Katayama M."/>
            <person name="Suzuki M."/>
            <person name="Aoki J."/>
            <person name="Arakawa T."/>
            <person name="Iida J."/>
            <person name="Imamura K."/>
            <person name="Itoh M."/>
            <person name="Kato T."/>
            <person name="Kawaji H."/>
            <person name="Kawagashira N."/>
            <person name="Kawashima T."/>
            <person name="Kojima M."/>
            <person name="Kondo S."/>
            <person name="Konno H."/>
            <person name="Nakano K."/>
            <person name="Ninomiya N."/>
            <person name="Nishio T."/>
            <person name="Okada M."/>
            <person name="Plessy C."/>
            <person name="Shibata K."/>
            <person name="Shiraki T."/>
            <person name="Suzuki S."/>
            <person name="Tagami M."/>
            <person name="Waki K."/>
            <person name="Watahiki A."/>
            <person name="Okamura-Oho Y."/>
            <person name="Suzuki H."/>
            <person name="Kawai J."/>
            <person name="Hayashizaki Y."/>
        </authorList>
    </citation>
    <scope>NUCLEOTIDE SEQUENCE [LARGE SCALE MRNA] OF 1645-2789</scope>
    <source>
        <strain>C57BL/6J</strain>
        <tissue>Pituitary</tissue>
    </source>
</reference>
<reference key="5">
    <citation type="journal article" date="2010" name="Cell">
        <title>A tissue-specific atlas of mouse protein phosphorylation and expression.</title>
        <authorList>
            <person name="Huttlin E.L."/>
            <person name="Jedrychowski M.P."/>
            <person name="Elias J.E."/>
            <person name="Goswami T."/>
            <person name="Rad R."/>
            <person name="Beausoleil S.A."/>
            <person name="Villen J."/>
            <person name="Haas W."/>
            <person name="Sowa M.E."/>
            <person name="Gygi S.P."/>
        </authorList>
    </citation>
    <scope>IDENTIFICATION BY MASS SPECTROMETRY [LARGE SCALE ANALYSIS]</scope>
    <source>
        <tissue>Brain</tissue>
        <tissue>Testis</tissue>
    </source>
</reference>
<reference key="6">
    <citation type="journal article" date="2018" name="Dev. Cell">
        <title>CRISPR screens uncover genes that regulate target cell sensitivity to the morphogen sonic hedgehog.</title>
        <authorList>
            <person name="Pusapati G.V."/>
            <person name="Kong J.H."/>
            <person name="Patel B.B."/>
            <person name="Krishnan A."/>
            <person name="Sagner A."/>
            <person name="Kinnebrew M."/>
            <person name="Briscoe J."/>
            <person name="Aravind L."/>
            <person name="Rohatgi R."/>
        </authorList>
    </citation>
    <scope>FUNCTION</scope>
</reference>
<protein>
    <recommendedName>
        <fullName>Multiple epidermal growth factor-like domains protein 8</fullName>
        <shortName>Multiple EGF-like domains protein 8</shortName>
    </recommendedName>
    <alternativeName>
        <fullName>Epidermal growth factor-like protein 4</fullName>
        <shortName>EGF-like protein 4</shortName>
    </alternativeName>
</protein>
<evidence type="ECO:0000250" key="1"/>
<evidence type="ECO:0000250" key="2">
    <source>
        <dbReference type="UniProtKB" id="Q9QYP0"/>
    </source>
</evidence>
<evidence type="ECO:0000255" key="3"/>
<evidence type="ECO:0000255" key="4">
    <source>
        <dbReference type="PROSITE-ProRule" id="PRU00059"/>
    </source>
</evidence>
<evidence type="ECO:0000255" key="5">
    <source>
        <dbReference type="PROSITE-ProRule" id="PRU00076"/>
    </source>
</evidence>
<evidence type="ECO:0000255" key="6">
    <source>
        <dbReference type="PROSITE-ProRule" id="PRU00460"/>
    </source>
</evidence>
<evidence type="ECO:0000256" key="7">
    <source>
        <dbReference type="SAM" id="MobiDB-lite"/>
    </source>
</evidence>
<evidence type="ECO:0000269" key="8">
    <source>
    </source>
</evidence>
<evidence type="ECO:0000269" key="9">
    <source>
    </source>
</evidence>
<evidence type="ECO:0000305" key="10"/>
<feature type="signal peptide" evidence="3">
    <location>
        <begin position="1"/>
        <end position="27"/>
    </location>
</feature>
<feature type="chain" id="PRO_0000055630" description="Multiple epidermal growth factor-like domains protein 8">
    <location>
        <begin position="28"/>
        <end position="2789"/>
    </location>
</feature>
<feature type="topological domain" description="Extracellular" evidence="3">
    <location>
        <begin position="28"/>
        <end position="2591"/>
    </location>
</feature>
<feature type="transmembrane region" description="Helical" evidence="3">
    <location>
        <begin position="2592"/>
        <end position="2612"/>
    </location>
</feature>
<feature type="topological domain" description="Cytoplasmic" evidence="3">
    <location>
        <begin position="2613"/>
        <end position="2789"/>
    </location>
</feature>
<feature type="domain" description="CUB 1" evidence="4">
    <location>
        <begin position="30"/>
        <end position="140"/>
    </location>
</feature>
<feature type="domain" description="EGF-like 1" evidence="5">
    <location>
        <begin position="138"/>
        <end position="168"/>
    </location>
</feature>
<feature type="domain" description="EGF-like 2" evidence="5">
    <location>
        <begin position="170"/>
        <end position="203"/>
    </location>
</feature>
<feature type="repeat" description="Kelch 1">
    <location>
        <begin position="241"/>
        <end position="287"/>
    </location>
</feature>
<feature type="repeat" description="Kelch 2">
    <location>
        <begin position="290"/>
        <end position="338"/>
    </location>
</feature>
<feature type="repeat" description="Kelch 3">
    <location>
        <begin position="346"/>
        <end position="399"/>
    </location>
</feature>
<feature type="repeat" description="Kelch 4">
    <location>
        <begin position="402"/>
        <end position="453"/>
    </location>
</feature>
<feature type="repeat" description="Kelch 5">
    <location>
        <begin position="459"/>
        <end position="511"/>
    </location>
</feature>
<feature type="repeat" description="Kelch 6">
    <location>
        <begin position="525"/>
        <end position="575"/>
    </location>
</feature>
<feature type="domain" description="PSI 1">
    <location>
        <begin position="561"/>
        <end position="613"/>
    </location>
</feature>
<feature type="domain" description="PSI 2">
    <location>
        <begin position="847"/>
        <end position="899"/>
    </location>
</feature>
<feature type="domain" description="PSI 3">
    <location>
        <begin position="900"/>
        <end position="947"/>
    </location>
</feature>
<feature type="domain" description="EGF-like 3; calcium-binding" evidence="5">
    <location>
        <begin position="1074"/>
        <end position="1115"/>
    </location>
</feature>
<feature type="domain" description="Laminin EGF-like 1" evidence="6">
    <location>
        <begin position="1163"/>
        <end position="1210"/>
    </location>
</feature>
<feature type="domain" description="Laminin EGF-like 2" evidence="6">
    <location>
        <begin position="1211"/>
        <end position="1261"/>
    </location>
</feature>
<feature type="domain" description="CUB 2" evidence="4">
    <location>
        <begin position="1263"/>
        <end position="1405"/>
    </location>
</feature>
<feature type="domain" description="EGF-like 4" evidence="5">
    <location>
        <begin position="1403"/>
        <end position="1445"/>
    </location>
</feature>
<feature type="repeat" description="Kelch 7">
    <location>
        <begin position="1522"/>
        <end position="1570"/>
    </location>
</feature>
<feature type="repeat" description="Kelch 8">
    <location>
        <begin position="1580"/>
        <end position="1629"/>
    </location>
</feature>
<feature type="repeat" description="Kelch 9">
    <location>
        <begin position="1632"/>
        <end position="1679"/>
    </location>
</feature>
<feature type="repeat" description="Kelch 10">
    <location>
        <begin position="1685"/>
        <end position="1735"/>
    </location>
</feature>
<feature type="repeat" description="Kelch 11">
    <location>
        <begin position="1740"/>
        <end position="1787"/>
    </location>
</feature>
<feature type="repeat" description="Kelch 12">
    <location>
        <begin position="1796"/>
        <end position="1841"/>
    </location>
</feature>
<feature type="domain" description="PSI 4">
    <location>
        <begin position="1820"/>
        <end position="1860"/>
    </location>
</feature>
<feature type="domain" description="PSI 5">
    <location>
        <begin position="1868"/>
        <end position="1923"/>
    </location>
</feature>
<feature type="domain" description="PSI 6">
    <location>
        <begin position="2004"/>
        <end position="2062"/>
    </location>
</feature>
<feature type="domain" description="PSI 7">
    <location>
        <begin position="2064"/>
        <end position="2121"/>
    </location>
</feature>
<feature type="domain" description="EGF-like 5" evidence="5">
    <location>
        <begin position="2122"/>
        <end position="2160"/>
    </location>
</feature>
<feature type="domain" description="Laminin EGF-like 3" evidence="6">
    <location>
        <begin position="2197"/>
        <end position="2245"/>
    </location>
</feature>
<feature type="domain" description="Laminin EGF-like 4" evidence="6">
    <location>
        <begin position="2324"/>
        <end position="2387"/>
    </location>
</feature>
<feature type="region of interest" description="Disordered" evidence="7">
    <location>
        <begin position="2468"/>
        <end position="2508"/>
    </location>
</feature>
<feature type="region of interest" description="Disordered" evidence="7">
    <location>
        <begin position="2762"/>
        <end position="2789"/>
    </location>
</feature>
<feature type="compositionally biased region" description="Pro residues" evidence="7">
    <location>
        <begin position="2471"/>
        <end position="2484"/>
    </location>
</feature>
<feature type="compositionally biased region" description="Gly residues" evidence="7">
    <location>
        <begin position="2762"/>
        <end position="2776"/>
    </location>
</feature>
<feature type="compositionally biased region" description="Polar residues" evidence="7">
    <location>
        <begin position="2780"/>
        <end position="2789"/>
    </location>
</feature>
<feature type="modified residue" description="Phosphothreonine" evidence="2">
    <location>
        <position position="1353"/>
    </location>
</feature>
<feature type="glycosylation site" description="N-linked (GlcNAc...) asparagine" evidence="3">
    <location>
        <position position="50"/>
    </location>
</feature>
<feature type="glycosylation site" description="N-linked (GlcNAc...) asparagine" evidence="3">
    <location>
        <position position="1048"/>
    </location>
</feature>
<feature type="glycosylation site" description="N-linked (GlcNAc...) asparagine" evidence="3">
    <location>
        <position position="1226"/>
    </location>
</feature>
<feature type="glycosylation site" description="N-linked (GlcNAc...) asparagine" evidence="3">
    <location>
        <position position="1271"/>
    </location>
</feature>
<feature type="glycosylation site" description="N-linked (GlcNAc...) asparagine" evidence="3">
    <location>
        <position position="2010"/>
    </location>
</feature>
<feature type="glycosylation site" description="N-linked (GlcNAc...) asparagine" evidence="3">
    <location>
        <position position="2158"/>
    </location>
</feature>
<feature type="glycosylation site" description="N-linked (GlcNAc...) asparagine" evidence="3">
    <location>
        <position position="2173"/>
    </location>
</feature>
<feature type="disulfide bond" evidence="1">
    <location>
        <begin position="30"/>
        <end position="57"/>
    </location>
</feature>
<feature type="disulfide bond" evidence="1">
    <location>
        <begin position="142"/>
        <end position="152"/>
    </location>
</feature>
<feature type="disulfide bond" evidence="1">
    <location>
        <begin position="146"/>
        <end position="158"/>
    </location>
</feature>
<feature type="disulfide bond" evidence="1">
    <location>
        <begin position="174"/>
        <end position="184"/>
    </location>
</feature>
<feature type="disulfide bond" evidence="1">
    <location>
        <begin position="178"/>
        <end position="191"/>
    </location>
</feature>
<feature type="disulfide bond" evidence="1">
    <location>
        <begin position="193"/>
        <end position="202"/>
    </location>
</feature>
<feature type="disulfide bond" evidence="1">
    <location>
        <begin position="1078"/>
        <end position="1091"/>
    </location>
</feature>
<feature type="disulfide bond" evidence="1">
    <location>
        <begin position="1085"/>
        <end position="1100"/>
    </location>
</feature>
<feature type="disulfide bond" evidence="1">
    <location>
        <begin position="1102"/>
        <end position="1114"/>
    </location>
</feature>
<feature type="disulfide bond" evidence="1">
    <location>
        <begin position="1163"/>
        <end position="1171"/>
    </location>
</feature>
<feature type="disulfide bond" evidence="1">
    <location>
        <begin position="1165"/>
        <end position="1179"/>
    </location>
</feature>
<feature type="disulfide bond" evidence="1">
    <location>
        <begin position="1182"/>
        <end position="1191"/>
    </location>
</feature>
<feature type="disulfide bond" evidence="1">
    <location>
        <begin position="1194"/>
        <end position="1208"/>
    </location>
</feature>
<feature type="disulfide bond" evidence="1">
    <location>
        <begin position="1211"/>
        <end position="1224"/>
    </location>
</feature>
<feature type="disulfide bond" evidence="1">
    <location>
        <begin position="1213"/>
        <end position="1231"/>
    </location>
</feature>
<feature type="disulfide bond" evidence="1">
    <location>
        <begin position="1233"/>
        <end position="1242"/>
    </location>
</feature>
<feature type="disulfide bond" evidence="1">
    <location>
        <begin position="1245"/>
        <end position="1259"/>
    </location>
</feature>
<feature type="disulfide bond" evidence="1">
    <location>
        <begin position="1263"/>
        <end position="1302"/>
    </location>
</feature>
<feature type="disulfide bond" evidence="1">
    <location>
        <begin position="1336"/>
        <end position="1367"/>
    </location>
</feature>
<feature type="disulfide bond" evidence="1">
    <location>
        <begin position="1407"/>
        <end position="1421"/>
    </location>
</feature>
<feature type="disulfide bond" evidence="1">
    <location>
        <begin position="1415"/>
        <end position="1433"/>
    </location>
</feature>
<feature type="disulfide bond" evidence="1">
    <location>
        <begin position="1435"/>
        <end position="1444"/>
    </location>
</feature>
<feature type="disulfide bond" evidence="1">
    <location>
        <begin position="2126"/>
        <end position="2139"/>
    </location>
</feature>
<feature type="disulfide bond" evidence="1">
    <location>
        <begin position="2133"/>
        <end position="2148"/>
    </location>
</feature>
<feature type="disulfide bond" evidence="1">
    <location>
        <begin position="2197"/>
        <end position="2205"/>
    </location>
</feature>
<feature type="disulfide bond" evidence="1">
    <location>
        <begin position="2199"/>
        <end position="2214"/>
    </location>
</feature>
<feature type="disulfide bond" evidence="1">
    <location>
        <begin position="2217"/>
        <end position="2226"/>
    </location>
</feature>
<feature type="disulfide bond" evidence="1">
    <location>
        <begin position="2229"/>
        <end position="2243"/>
    </location>
</feature>
<feature type="disulfide bond" evidence="1">
    <location>
        <begin position="2324"/>
        <end position="2333"/>
    </location>
</feature>
<feature type="disulfide bond" evidence="1">
    <location>
        <begin position="2326"/>
        <end position="2341"/>
    </location>
</feature>
<feature type="disulfide bond" evidence="1">
    <location>
        <begin position="2343"/>
        <end position="2368"/>
    </location>
</feature>
<feature type="disulfide bond" evidence="1">
    <location>
        <begin position="2371"/>
        <end position="2385"/>
    </location>
</feature>
<feature type="sequence conflict" description="In Ref. 2; AAH51121." evidence="10" ref="2">
    <original>L</original>
    <variation>S</variation>
    <location>
        <position position="540"/>
    </location>
</feature>
<feature type="sequence conflict" description="In Ref. 2; AAH51121." evidence="10" ref="2">
    <original>D</original>
    <variation>N</variation>
    <location>
        <position position="560"/>
    </location>
</feature>
<feature type="sequence conflict" description="In Ref. 3; BAC65659." evidence="10" ref="3">
    <original>N</original>
    <variation>K</variation>
    <location>
        <position position="1391"/>
    </location>
</feature>
<dbReference type="EMBL" id="EU723517">
    <property type="protein sequence ID" value="ACE00231.1"/>
    <property type="molecule type" value="mRNA"/>
</dbReference>
<dbReference type="EMBL" id="BC031185">
    <property type="protein sequence ID" value="AAH31185.1"/>
    <property type="molecule type" value="mRNA"/>
</dbReference>
<dbReference type="EMBL" id="BC036727">
    <property type="protein sequence ID" value="AAH36727.1"/>
    <property type="status" value="ALT_SEQ"/>
    <property type="molecule type" value="mRNA"/>
</dbReference>
<dbReference type="EMBL" id="BC051121">
    <property type="protein sequence ID" value="AAH51121.1"/>
    <property type="status" value="ALT_SEQ"/>
    <property type="molecule type" value="mRNA"/>
</dbReference>
<dbReference type="EMBL" id="BC060277">
    <property type="protein sequence ID" value="AAH60277.1"/>
    <property type="molecule type" value="mRNA"/>
</dbReference>
<dbReference type="EMBL" id="AK122377">
    <property type="protein sequence ID" value="BAC65659.1"/>
    <property type="molecule type" value="mRNA"/>
</dbReference>
<dbReference type="EMBL" id="AK030408">
    <property type="protein sequence ID" value="BAC26949.1"/>
    <property type="molecule type" value="mRNA"/>
</dbReference>
<dbReference type="CCDS" id="CCDS52148.1"/>
<dbReference type="RefSeq" id="NP_001153872.1">
    <property type="nucleotide sequence ID" value="NM_001160400.1"/>
</dbReference>
<dbReference type="SMR" id="P60882"/>
<dbReference type="BioGRID" id="234725">
    <property type="interactions" value="2"/>
</dbReference>
<dbReference type="CORUM" id="P60882"/>
<dbReference type="FunCoup" id="P60882">
    <property type="interactions" value="1917"/>
</dbReference>
<dbReference type="STRING" id="10090.ENSMUSP00000122192"/>
<dbReference type="GlyConnect" id="2516">
    <property type="glycosylation" value="5 N-Linked glycans (5 sites)"/>
</dbReference>
<dbReference type="GlyCosmos" id="P60882">
    <property type="glycosylation" value="11 sites, 5 glycans"/>
</dbReference>
<dbReference type="GlyGen" id="P60882">
    <property type="glycosylation" value="21 sites, 13 N-linked glycans (13 sites), 1 O-linked glycan (1 site)"/>
</dbReference>
<dbReference type="iPTMnet" id="P60882"/>
<dbReference type="PhosphoSitePlus" id="P60882"/>
<dbReference type="PaxDb" id="10090-ENSMUSP00000122192"/>
<dbReference type="PeptideAtlas" id="P60882"/>
<dbReference type="ProteomicsDB" id="292215"/>
<dbReference type="Antibodypedia" id="58360">
    <property type="antibodies" value="105 antibodies from 22 providers"/>
</dbReference>
<dbReference type="Ensembl" id="ENSMUST00000128119.2">
    <property type="protein sequence ID" value="ENSMUSP00000122192.2"/>
    <property type="gene ID" value="ENSMUSG00000045039.10"/>
</dbReference>
<dbReference type="GeneID" id="269878"/>
<dbReference type="KEGG" id="mmu:269878"/>
<dbReference type="UCSC" id="uc009fsj.2">
    <property type="organism name" value="mouse"/>
</dbReference>
<dbReference type="AGR" id="MGI:2446294"/>
<dbReference type="CTD" id="1954"/>
<dbReference type="MGI" id="MGI:2446294">
    <property type="gene designation" value="Megf8"/>
</dbReference>
<dbReference type="VEuPathDB" id="HostDB:ENSMUSG00000045039"/>
<dbReference type="eggNOG" id="KOG1388">
    <property type="taxonomic scope" value="Eukaryota"/>
</dbReference>
<dbReference type="GeneTree" id="ENSGT00940000160262"/>
<dbReference type="HOGENOM" id="CLU_000612_0_0_1"/>
<dbReference type="InParanoid" id="P60882"/>
<dbReference type="OMA" id="PVCQWCD"/>
<dbReference type="OrthoDB" id="263283at2759"/>
<dbReference type="PhylomeDB" id="P60882"/>
<dbReference type="TreeFam" id="TF321873"/>
<dbReference type="BioGRID-ORCS" id="269878">
    <property type="hits" value="6 hits in 79 CRISPR screens"/>
</dbReference>
<dbReference type="ChiTaRS" id="Megf8">
    <property type="organism name" value="mouse"/>
</dbReference>
<dbReference type="PRO" id="PR:P60882"/>
<dbReference type="Proteomes" id="UP000000589">
    <property type="component" value="Chromosome 7"/>
</dbReference>
<dbReference type="RNAct" id="P60882">
    <property type="molecule type" value="protein"/>
</dbReference>
<dbReference type="Bgee" id="ENSMUSG00000045039">
    <property type="expression patterns" value="Expressed in otolith organ and 216 other cell types or tissues"/>
</dbReference>
<dbReference type="GO" id="GO:0016020">
    <property type="term" value="C:membrane"/>
    <property type="evidence" value="ECO:0007669"/>
    <property type="project" value="UniProtKB-SubCell"/>
</dbReference>
<dbReference type="GO" id="GO:0005634">
    <property type="term" value="C:nucleus"/>
    <property type="evidence" value="ECO:0000314"/>
    <property type="project" value="MGI"/>
</dbReference>
<dbReference type="GO" id="GO:0000151">
    <property type="term" value="C:ubiquitin ligase complex"/>
    <property type="evidence" value="ECO:0000314"/>
    <property type="project" value="MGI"/>
</dbReference>
<dbReference type="GO" id="GO:0005509">
    <property type="term" value="F:calcium ion binding"/>
    <property type="evidence" value="ECO:0007669"/>
    <property type="project" value="InterPro"/>
</dbReference>
<dbReference type="GO" id="GO:0035904">
    <property type="term" value="P:aorta development"/>
    <property type="evidence" value="ECO:0000315"/>
    <property type="project" value="MGI"/>
</dbReference>
<dbReference type="GO" id="GO:0030509">
    <property type="term" value="P:BMP signaling pathway"/>
    <property type="evidence" value="ECO:0000316"/>
    <property type="project" value="UniProtKB"/>
</dbReference>
<dbReference type="GO" id="GO:0042074">
    <property type="term" value="P:cell migration involved in gastrulation"/>
    <property type="evidence" value="ECO:0007669"/>
    <property type="project" value="Ensembl"/>
</dbReference>
<dbReference type="GO" id="GO:0060976">
    <property type="term" value="P:coronary vasculature development"/>
    <property type="evidence" value="ECO:0000315"/>
    <property type="project" value="MGI"/>
</dbReference>
<dbReference type="GO" id="GO:0097094">
    <property type="term" value="P:craniofacial suture morphogenesis"/>
    <property type="evidence" value="ECO:0007669"/>
    <property type="project" value="Ensembl"/>
</dbReference>
<dbReference type="GO" id="GO:0071907">
    <property type="term" value="P:determination of digestive tract left/right asymmetry"/>
    <property type="evidence" value="ECO:0000315"/>
    <property type="project" value="MGI"/>
</dbReference>
<dbReference type="GO" id="GO:0061371">
    <property type="term" value="P:determination of heart left/right asymmetry"/>
    <property type="evidence" value="ECO:0000315"/>
    <property type="project" value="MGI"/>
</dbReference>
<dbReference type="GO" id="GO:0007368">
    <property type="term" value="P:determination of left/right symmetry"/>
    <property type="evidence" value="ECO:0000315"/>
    <property type="project" value="MGI"/>
</dbReference>
<dbReference type="GO" id="GO:1990403">
    <property type="term" value="P:embryonic brain development"/>
    <property type="evidence" value="ECO:0000315"/>
    <property type="project" value="MGI"/>
</dbReference>
<dbReference type="GO" id="GO:0042733">
    <property type="term" value="P:embryonic digit morphogenesis"/>
    <property type="evidence" value="ECO:0000315"/>
    <property type="project" value="MGI"/>
</dbReference>
<dbReference type="GO" id="GO:0060971">
    <property type="term" value="P:embryonic heart tube left/right pattern formation"/>
    <property type="evidence" value="ECO:0000315"/>
    <property type="project" value="UniProtKB"/>
</dbReference>
<dbReference type="GO" id="GO:0003143">
    <property type="term" value="P:embryonic heart tube morphogenesis"/>
    <property type="evidence" value="ECO:0000315"/>
    <property type="project" value="UniProtKB"/>
</dbReference>
<dbReference type="GO" id="GO:0030326">
    <property type="term" value="P:embryonic limb morphogenesis"/>
    <property type="evidence" value="ECO:0000315"/>
    <property type="project" value="UniProtKB"/>
</dbReference>
<dbReference type="GO" id="GO:0048704">
    <property type="term" value="P:embryonic skeletal system morphogenesis"/>
    <property type="evidence" value="ECO:0000315"/>
    <property type="project" value="UniProtKB"/>
</dbReference>
<dbReference type="GO" id="GO:0055113">
    <property type="term" value="P:epiboly involved in gastrulation with mouth forming second"/>
    <property type="evidence" value="ECO:0007669"/>
    <property type="project" value="Ensembl"/>
</dbReference>
<dbReference type="GO" id="GO:0097155">
    <property type="term" value="P:fasciculation of sensory neuron axon"/>
    <property type="evidence" value="ECO:0000315"/>
    <property type="project" value="UniProtKB"/>
</dbReference>
<dbReference type="GO" id="GO:0007507">
    <property type="term" value="P:heart development"/>
    <property type="evidence" value="ECO:0000315"/>
    <property type="project" value="MGI"/>
</dbReference>
<dbReference type="GO" id="GO:0060972">
    <property type="term" value="P:left/right pattern formation"/>
    <property type="evidence" value="ECO:0000315"/>
    <property type="project" value="UniProtKB"/>
</dbReference>
<dbReference type="GO" id="GO:0060173">
    <property type="term" value="P:limb development"/>
    <property type="evidence" value="ECO:0000315"/>
    <property type="project" value="MGI"/>
</dbReference>
<dbReference type="GO" id="GO:0045879">
    <property type="term" value="P:negative regulation of smoothened signaling pathway"/>
    <property type="evidence" value="ECO:0000315"/>
    <property type="project" value="UniProtKB"/>
</dbReference>
<dbReference type="GO" id="GO:0061626">
    <property type="term" value="P:pharyngeal arch artery morphogenesis"/>
    <property type="evidence" value="ECO:0000315"/>
    <property type="project" value="MGI"/>
</dbReference>
<dbReference type="GO" id="GO:0048842">
    <property type="term" value="P:positive regulation of axon extension involved in axon guidance"/>
    <property type="evidence" value="ECO:0000315"/>
    <property type="project" value="UniProtKB"/>
</dbReference>
<dbReference type="GO" id="GO:0016567">
    <property type="term" value="P:protein ubiquitination"/>
    <property type="evidence" value="ECO:0000314"/>
    <property type="project" value="MGI"/>
</dbReference>
<dbReference type="GO" id="GO:0065003">
    <property type="term" value="P:protein-containing complex assembly"/>
    <property type="evidence" value="ECO:0000314"/>
    <property type="project" value="MGI"/>
</dbReference>
<dbReference type="GO" id="GO:0010468">
    <property type="term" value="P:regulation of gene expression"/>
    <property type="evidence" value="ECO:0000315"/>
    <property type="project" value="UniProtKB"/>
</dbReference>
<dbReference type="GO" id="GO:0007224">
    <property type="term" value="P:smoothened signaling pathway"/>
    <property type="evidence" value="ECO:0000315"/>
    <property type="project" value="MGI"/>
</dbReference>
<dbReference type="CDD" id="cd00041">
    <property type="entry name" value="CUB"/>
    <property type="match status" value="1"/>
</dbReference>
<dbReference type="CDD" id="cd00054">
    <property type="entry name" value="EGF_CA"/>
    <property type="match status" value="2"/>
</dbReference>
<dbReference type="CDD" id="cd00055">
    <property type="entry name" value="EGF_Lam"/>
    <property type="match status" value="2"/>
</dbReference>
<dbReference type="FunFam" id="2.10.25.10:FF:000191">
    <property type="entry name" value="Multiple epidermal growth factor-like domains 8"/>
    <property type="match status" value="1"/>
</dbReference>
<dbReference type="FunFam" id="2.10.25.10:FF:000202">
    <property type="entry name" value="Multiple epidermal growth factor-like domains 8"/>
    <property type="match status" value="1"/>
</dbReference>
<dbReference type="FunFam" id="2.10.25.10:FF:000207">
    <property type="entry name" value="Multiple epidermal growth factor-like domains 8"/>
    <property type="match status" value="1"/>
</dbReference>
<dbReference type="FunFam" id="2.10.25.10:FF:000214">
    <property type="entry name" value="Multiple epidermal growth factor-like domains 8"/>
    <property type="match status" value="1"/>
</dbReference>
<dbReference type="FunFam" id="2.10.25.10:FF:000331">
    <property type="entry name" value="Multiple epidermal growth factor-like domains 8"/>
    <property type="match status" value="1"/>
</dbReference>
<dbReference type="FunFam" id="2.10.25.10:FF:000532">
    <property type="entry name" value="Multiple epidermal growth factor-like domains 8"/>
    <property type="match status" value="1"/>
</dbReference>
<dbReference type="FunFam" id="2.120.10.80:FF:000030">
    <property type="entry name" value="Multiple epidermal growth factor-like domains 8"/>
    <property type="match status" value="1"/>
</dbReference>
<dbReference type="FunFam" id="2.120.10.80:FF:000033">
    <property type="entry name" value="Multiple epidermal growth factor-like domains 8"/>
    <property type="match status" value="1"/>
</dbReference>
<dbReference type="FunFam" id="2.60.120.290:FF:000023">
    <property type="entry name" value="Multiple epidermal growth factor-like domains 8"/>
    <property type="match status" value="1"/>
</dbReference>
<dbReference type="FunFam" id="2.120.10.80:FF:000051">
    <property type="entry name" value="Multiple epidermal growth factor-like domains protein 8"/>
    <property type="match status" value="1"/>
</dbReference>
<dbReference type="FunFam" id="2.120.10.80:FF:000069">
    <property type="entry name" value="Multiple epidermal growth factor-like domains protein 8"/>
    <property type="match status" value="1"/>
</dbReference>
<dbReference type="Gene3D" id="2.120.10.80">
    <property type="entry name" value="Kelch-type beta propeller"/>
    <property type="match status" value="4"/>
</dbReference>
<dbReference type="Gene3D" id="2.10.25.10">
    <property type="entry name" value="Laminin"/>
    <property type="match status" value="7"/>
</dbReference>
<dbReference type="Gene3D" id="2.60.120.290">
    <property type="entry name" value="Spermadhesin, CUB domain"/>
    <property type="match status" value="1"/>
</dbReference>
<dbReference type="InterPro" id="IPR056737">
    <property type="entry name" value="Beta-prop_ATRN-MKLN-like"/>
</dbReference>
<dbReference type="InterPro" id="IPR000859">
    <property type="entry name" value="CUB_dom"/>
</dbReference>
<dbReference type="InterPro" id="IPR001881">
    <property type="entry name" value="EGF-like_Ca-bd_dom"/>
</dbReference>
<dbReference type="InterPro" id="IPR000742">
    <property type="entry name" value="EGF-like_dom"/>
</dbReference>
<dbReference type="InterPro" id="IPR000152">
    <property type="entry name" value="EGF-type_Asp/Asn_hydroxyl_site"/>
</dbReference>
<dbReference type="InterPro" id="IPR018097">
    <property type="entry name" value="EGF_Ca-bd_CS"/>
</dbReference>
<dbReference type="InterPro" id="IPR024731">
    <property type="entry name" value="EGF_dom"/>
</dbReference>
<dbReference type="InterPro" id="IPR015915">
    <property type="entry name" value="Kelch-typ_b-propeller"/>
</dbReference>
<dbReference type="InterPro" id="IPR002049">
    <property type="entry name" value="LE_dom"/>
</dbReference>
<dbReference type="InterPro" id="IPR056863">
    <property type="entry name" value="LMN_ATRN_NET-like_EGF"/>
</dbReference>
<dbReference type="InterPro" id="IPR049883">
    <property type="entry name" value="NOTCH1_EGF-like"/>
</dbReference>
<dbReference type="InterPro" id="IPR002165">
    <property type="entry name" value="Plexin_repeat"/>
</dbReference>
<dbReference type="InterPro" id="IPR016201">
    <property type="entry name" value="PSI"/>
</dbReference>
<dbReference type="InterPro" id="IPR035914">
    <property type="entry name" value="Sperma_CUB_dom_sf"/>
</dbReference>
<dbReference type="PANTHER" id="PTHR46093">
    <property type="entry name" value="ACYL-COA-BINDING DOMAIN-CONTAINING PROTEIN 5"/>
    <property type="match status" value="1"/>
</dbReference>
<dbReference type="PANTHER" id="PTHR46093:SF18">
    <property type="entry name" value="FIBRONECTIN TYPE-III DOMAIN-CONTAINING PROTEIN"/>
    <property type="match status" value="1"/>
</dbReference>
<dbReference type="Pfam" id="PF24981">
    <property type="entry name" value="Beta-prop_ATRN-LZTR1"/>
    <property type="match status" value="2"/>
</dbReference>
<dbReference type="Pfam" id="PF00431">
    <property type="entry name" value="CUB"/>
    <property type="match status" value="1"/>
</dbReference>
<dbReference type="Pfam" id="PF12947">
    <property type="entry name" value="EGF_3"/>
    <property type="match status" value="1"/>
</dbReference>
<dbReference type="Pfam" id="PF07645">
    <property type="entry name" value="EGF_CA"/>
    <property type="match status" value="1"/>
</dbReference>
<dbReference type="Pfam" id="PF00053">
    <property type="entry name" value="EGF_laminin"/>
    <property type="match status" value="1"/>
</dbReference>
<dbReference type="Pfam" id="PF24973">
    <property type="entry name" value="EGF_LMN_ATRN"/>
    <property type="match status" value="3"/>
</dbReference>
<dbReference type="Pfam" id="PF23106">
    <property type="entry name" value="EGF_Teneurin"/>
    <property type="match status" value="1"/>
</dbReference>
<dbReference type="Pfam" id="PF01437">
    <property type="entry name" value="PSI"/>
    <property type="match status" value="1"/>
</dbReference>
<dbReference type="PRINTS" id="PR00011">
    <property type="entry name" value="EGFLAMININ"/>
</dbReference>
<dbReference type="SMART" id="SM00042">
    <property type="entry name" value="CUB"/>
    <property type="match status" value="1"/>
</dbReference>
<dbReference type="SMART" id="SM00181">
    <property type="entry name" value="EGF"/>
    <property type="match status" value="13"/>
</dbReference>
<dbReference type="SMART" id="SM00179">
    <property type="entry name" value="EGF_CA"/>
    <property type="match status" value="2"/>
</dbReference>
<dbReference type="SMART" id="SM00180">
    <property type="entry name" value="EGF_Lam"/>
    <property type="match status" value="4"/>
</dbReference>
<dbReference type="SMART" id="SM00423">
    <property type="entry name" value="PSI"/>
    <property type="match status" value="9"/>
</dbReference>
<dbReference type="SUPFAM" id="SSF57196">
    <property type="entry name" value="EGF/Laminin"/>
    <property type="match status" value="4"/>
</dbReference>
<dbReference type="SUPFAM" id="SSF117281">
    <property type="entry name" value="Kelch motif"/>
    <property type="match status" value="2"/>
</dbReference>
<dbReference type="SUPFAM" id="SSF49854">
    <property type="entry name" value="Spermadhesin, CUB domain"/>
    <property type="match status" value="1"/>
</dbReference>
<dbReference type="PROSITE" id="PS00010">
    <property type="entry name" value="ASX_HYDROXYL"/>
    <property type="match status" value="2"/>
</dbReference>
<dbReference type="PROSITE" id="PS01180">
    <property type="entry name" value="CUB"/>
    <property type="match status" value="2"/>
</dbReference>
<dbReference type="PROSITE" id="PS00022">
    <property type="entry name" value="EGF_1"/>
    <property type="match status" value="6"/>
</dbReference>
<dbReference type="PROSITE" id="PS01186">
    <property type="entry name" value="EGF_2"/>
    <property type="match status" value="7"/>
</dbReference>
<dbReference type="PROSITE" id="PS50026">
    <property type="entry name" value="EGF_3"/>
    <property type="match status" value="5"/>
</dbReference>
<dbReference type="PROSITE" id="PS01187">
    <property type="entry name" value="EGF_CA"/>
    <property type="match status" value="1"/>
</dbReference>
<dbReference type="PROSITE" id="PS01248">
    <property type="entry name" value="EGF_LAM_1"/>
    <property type="match status" value="4"/>
</dbReference>
<dbReference type="PROSITE" id="PS50027">
    <property type="entry name" value="EGF_LAM_2"/>
    <property type="match status" value="4"/>
</dbReference>
<gene>
    <name type="primary">Megf8</name>
    <name type="synonym">Egfl4</name>
</gene>
<organism>
    <name type="scientific">Mus musculus</name>
    <name type="common">Mouse</name>
    <dbReference type="NCBI Taxonomy" id="10090"/>
    <lineage>
        <taxon>Eukaryota</taxon>
        <taxon>Metazoa</taxon>
        <taxon>Chordata</taxon>
        <taxon>Craniata</taxon>
        <taxon>Vertebrata</taxon>
        <taxon>Euteleostomi</taxon>
        <taxon>Mammalia</taxon>
        <taxon>Eutheria</taxon>
        <taxon>Euarchontoglires</taxon>
        <taxon>Glires</taxon>
        <taxon>Rodentia</taxon>
        <taxon>Myomorpha</taxon>
        <taxon>Muroidea</taxon>
        <taxon>Muridae</taxon>
        <taxon>Murinae</taxon>
        <taxon>Mus</taxon>
        <taxon>Mus</taxon>
    </lineage>
</organism>